<gene>
    <name evidence="1" type="primary">cysI</name>
    <name type="ordered locus">MexAM1_META1p2233</name>
</gene>
<feature type="chain" id="PRO_0000388494" description="Sulfite reductase [NADPH] hemoprotein beta-component">
    <location>
        <begin position="1"/>
        <end position="612"/>
    </location>
</feature>
<feature type="region of interest" description="Disordered" evidence="2">
    <location>
        <begin position="1"/>
        <end position="26"/>
    </location>
</feature>
<feature type="binding site" evidence="1">
    <location>
        <position position="469"/>
    </location>
    <ligand>
        <name>[4Fe-4S] cluster</name>
        <dbReference type="ChEBI" id="CHEBI:49883"/>
    </ligand>
</feature>
<feature type="binding site" evidence="1">
    <location>
        <position position="475"/>
    </location>
    <ligand>
        <name>[4Fe-4S] cluster</name>
        <dbReference type="ChEBI" id="CHEBI:49883"/>
    </ligand>
</feature>
<feature type="binding site" evidence="1">
    <location>
        <position position="514"/>
    </location>
    <ligand>
        <name>[4Fe-4S] cluster</name>
        <dbReference type="ChEBI" id="CHEBI:49883"/>
    </ligand>
</feature>
<feature type="binding site" evidence="1">
    <location>
        <position position="518"/>
    </location>
    <ligand>
        <name>[4Fe-4S] cluster</name>
        <dbReference type="ChEBI" id="CHEBI:49883"/>
    </ligand>
</feature>
<feature type="binding site" description="axial binding residue" evidence="1">
    <location>
        <position position="518"/>
    </location>
    <ligand>
        <name>siroheme</name>
        <dbReference type="ChEBI" id="CHEBI:60052"/>
    </ligand>
    <ligandPart>
        <name>Fe</name>
        <dbReference type="ChEBI" id="CHEBI:18248"/>
    </ligandPart>
</feature>
<reference key="1">
    <citation type="journal article" date="2009" name="PLoS ONE">
        <title>Methylobacterium genome sequences: a reference blueprint to investigate microbial metabolism of C1 compounds from natural and industrial sources.</title>
        <authorList>
            <person name="Vuilleumier S."/>
            <person name="Chistoserdova L."/>
            <person name="Lee M.-C."/>
            <person name="Bringel F."/>
            <person name="Lajus A."/>
            <person name="Zhou Y."/>
            <person name="Gourion B."/>
            <person name="Barbe V."/>
            <person name="Chang J."/>
            <person name="Cruveiller S."/>
            <person name="Dossat C."/>
            <person name="Gillett W."/>
            <person name="Gruffaz C."/>
            <person name="Haugen E."/>
            <person name="Hourcade E."/>
            <person name="Levy R."/>
            <person name="Mangenot S."/>
            <person name="Muller E."/>
            <person name="Nadalig T."/>
            <person name="Pagni M."/>
            <person name="Penny C."/>
            <person name="Peyraud R."/>
            <person name="Robinson D.G."/>
            <person name="Roche D."/>
            <person name="Rouy Z."/>
            <person name="Saenampechek C."/>
            <person name="Salvignol G."/>
            <person name="Vallenet D."/>
            <person name="Wu Z."/>
            <person name="Marx C.J."/>
            <person name="Vorholt J.A."/>
            <person name="Olson M.V."/>
            <person name="Kaul R."/>
            <person name="Weissenbach J."/>
            <person name="Medigue C."/>
            <person name="Lidstrom M.E."/>
        </authorList>
    </citation>
    <scope>NUCLEOTIDE SEQUENCE [LARGE SCALE GENOMIC DNA]</scope>
    <source>
        <strain>ATCC 14718 / DSM 1338 / JCM 2805 / NCIMB 9133 / AM1</strain>
    </source>
</reference>
<name>CYSI_METEA</name>
<proteinExistence type="inferred from homology"/>
<keyword id="KW-0004">4Fe-4S</keyword>
<keyword id="KW-0028">Amino-acid biosynthesis</keyword>
<keyword id="KW-0198">Cysteine biosynthesis</keyword>
<keyword id="KW-0349">Heme</keyword>
<keyword id="KW-0408">Iron</keyword>
<keyword id="KW-0411">Iron-sulfur</keyword>
<keyword id="KW-0479">Metal-binding</keyword>
<keyword id="KW-0521">NADP</keyword>
<keyword id="KW-0560">Oxidoreductase</keyword>
<keyword id="KW-1185">Reference proteome</keyword>
<dbReference type="EC" id="1.8.1.2" evidence="1"/>
<dbReference type="EMBL" id="CP001510">
    <property type="protein sequence ID" value="ACS40026.1"/>
    <property type="molecule type" value="Genomic_DNA"/>
</dbReference>
<dbReference type="RefSeq" id="WP_003603574.1">
    <property type="nucleotide sequence ID" value="NC_012808.1"/>
</dbReference>
<dbReference type="SMR" id="C5APZ1"/>
<dbReference type="STRING" id="272630.MexAM1_META1p2233"/>
<dbReference type="KEGG" id="mea:Mex_1p2233"/>
<dbReference type="eggNOG" id="COG0155">
    <property type="taxonomic scope" value="Bacteria"/>
</dbReference>
<dbReference type="HOGENOM" id="CLU_001975_3_2_5"/>
<dbReference type="OrthoDB" id="9803707at2"/>
<dbReference type="UniPathway" id="UPA00140">
    <property type="reaction ID" value="UER00207"/>
</dbReference>
<dbReference type="Proteomes" id="UP000009081">
    <property type="component" value="Chromosome"/>
</dbReference>
<dbReference type="GO" id="GO:0009337">
    <property type="term" value="C:sulfite reductase complex (NADPH)"/>
    <property type="evidence" value="ECO:0007669"/>
    <property type="project" value="InterPro"/>
</dbReference>
<dbReference type="GO" id="GO:0051539">
    <property type="term" value="F:4 iron, 4 sulfur cluster binding"/>
    <property type="evidence" value="ECO:0007669"/>
    <property type="project" value="UniProtKB-KW"/>
</dbReference>
<dbReference type="GO" id="GO:0020037">
    <property type="term" value="F:heme binding"/>
    <property type="evidence" value="ECO:0007669"/>
    <property type="project" value="InterPro"/>
</dbReference>
<dbReference type="GO" id="GO:0046872">
    <property type="term" value="F:metal ion binding"/>
    <property type="evidence" value="ECO:0007669"/>
    <property type="project" value="UniProtKB-KW"/>
</dbReference>
<dbReference type="GO" id="GO:0050661">
    <property type="term" value="F:NADP binding"/>
    <property type="evidence" value="ECO:0007669"/>
    <property type="project" value="InterPro"/>
</dbReference>
<dbReference type="GO" id="GO:0050311">
    <property type="term" value="F:sulfite reductase (ferredoxin) activity"/>
    <property type="evidence" value="ECO:0007669"/>
    <property type="project" value="TreeGrafter"/>
</dbReference>
<dbReference type="GO" id="GO:0004783">
    <property type="term" value="F:sulfite reductase (NADPH) activity"/>
    <property type="evidence" value="ECO:0007669"/>
    <property type="project" value="UniProtKB-UniRule"/>
</dbReference>
<dbReference type="GO" id="GO:0019344">
    <property type="term" value="P:cysteine biosynthetic process"/>
    <property type="evidence" value="ECO:0007669"/>
    <property type="project" value="UniProtKB-KW"/>
</dbReference>
<dbReference type="GO" id="GO:0070814">
    <property type="term" value="P:hydrogen sulfide biosynthetic process"/>
    <property type="evidence" value="ECO:0007669"/>
    <property type="project" value="UniProtKB-UniRule"/>
</dbReference>
<dbReference type="GO" id="GO:0000103">
    <property type="term" value="P:sulfate assimilation"/>
    <property type="evidence" value="ECO:0007669"/>
    <property type="project" value="UniProtKB-UniRule"/>
</dbReference>
<dbReference type="FunFam" id="3.30.413.10:FF:000003">
    <property type="entry name" value="Sulfite reductase [NADPH] hemoprotein beta-component"/>
    <property type="match status" value="1"/>
</dbReference>
<dbReference type="FunFam" id="3.30.413.10:FF:000004">
    <property type="entry name" value="Sulfite reductase [NADPH] hemoprotein beta-component"/>
    <property type="match status" value="1"/>
</dbReference>
<dbReference type="Gene3D" id="3.30.413.10">
    <property type="entry name" value="Sulfite Reductase Hemoprotein, domain 1"/>
    <property type="match status" value="2"/>
</dbReference>
<dbReference type="HAMAP" id="MF_01540">
    <property type="entry name" value="CysI"/>
    <property type="match status" value="1"/>
</dbReference>
<dbReference type="InterPro" id="IPR011786">
    <property type="entry name" value="CysI"/>
</dbReference>
<dbReference type="InterPro" id="IPR005117">
    <property type="entry name" value="NiRdtase/SiRdtase_haem-b_fer"/>
</dbReference>
<dbReference type="InterPro" id="IPR036136">
    <property type="entry name" value="Nit/Sulf_reduc_fer-like_dom_sf"/>
</dbReference>
<dbReference type="InterPro" id="IPR006067">
    <property type="entry name" value="NO2/SO3_Rdtase_4Fe4S_dom"/>
</dbReference>
<dbReference type="InterPro" id="IPR045169">
    <property type="entry name" value="NO2/SO3_Rdtase_4Fe4S_prot"/>
</dbReference>
<dbReference type="InterPro" id="IPR045854">
    <property type="entry name" value="NO2/SO3_Rdtase_4Fe4S_sf"/>
</dbReference>
<dbReference type="InterPro" id="IPR006066">
    <property type="entry name" value="NO2/SO3_Rdtase_FeS/sirohaem_BS"/>
</dbReference>
<dbReference type="NCBIfam" id="TIGR02041">
    <property type="entry name" value="CysI"/>
    <property type="match status" value="1"/>
</dbReference>
<dbReference type="NCBIfam" id="NF010029">
    <property type="entry name" value="PRK13504.1"/>
    <property type="match status" value="1"/>
</dbReference>
<dbReference type="PANTHER" id="PTHR11493:SF47">
    <property type="entry name" value="SULFITE REDUCTASE [NADPH] SUBUNIT BETA"/>
    <property type="match status" value="1"/>
</dbReference>
<dbReference type="PANTHER" id="PTHR11493">
    <property type="entry name" value="SULFITE REDUCTASE [NADPH] SUBUNIT BETA-RELATED"/>
    <property type="match status" value="1"/>
</dbReference>
<dbReference type="Pfam" id="PF01077">
    <property type="entry name" value="NIR_SIR"/>
    <property type="match status" value="1"/>
</dbReference>
<dbReference type="Pfam" id="PF03460">
    <property type="entry name" value="NIR_SIR_ferr"/>
    <property type="match status" value="2"/>
</dbReference>
<dbReference type="PRINTS" id="PR00397">
    <property type="entry name" value="SIROHAEM"/>
</dbReference>
<dbReference type="SUPFAM" id="SSF56014">
    <property type="entry name" value="Nitrite and sulphite reductase 4Fe-4S domain-like"/>
    <property type="match status" value="2"/>
</dbReference>
<dbReference type="SUPFAM" id="SSF55124">
    <property type="entry name" value="Nitrite/Sulfite reductase N-terminal domain-like"/>
    <property type="match status" value="2"/>
</dbReference>
<dbReference type="PROSITE" id="PS00365">
    <property type="entry name" value="NIR_SIR"/>
    <property type="match status" value="1"/>
</dbReference>
<evidence type="ECO:0000255" key="1">
    <source>
        <dbReference type="HAMAP-Rule" id="MF_01540"/>
    </source>
</evidence>
<evidence type="ECO:0000256" key="2">
    <source>
        <dbReference type="SAM" id="MobiDB-lite"/>
    </source>
</evidence>
<comment type="function">
    <text evidence="1">Component of the sulfite reductase complex that catalyzes the 6-electron reduction of sulfite to sulfide. This is one of several activities required for the biosynthesis of L-cysteine from sulfate.</text>
</comment>
<comment type="catalytic activity">
    <reaction evidence="1">
        <text>hydrogen sulfide + 3 NADP(+) + 3 H2O = sulfite + 3 NADPH + 4 H(+)</text>
        <dbReference type="Rhea" id="RHEA:13801"/>
        <dbReference type="ChEBI" id="CHEBI:15377"/>
        <dbReference type="ChEBI" id="CHEBI:15378"/>
        <dbReference type="ChEBI" id="CHEBI:17359"/>
        <dbReference type="ChEBI" id="CHEBI:29919"/>
        <dbReference type="ChEBI" id="CHEBI:57783"/>
        <dbReference type="ChEBI" id="CHEBI:58349"/>
        <dbReference type="EC" id="1.8.1.2"/>
    </reaction>
</comment>
<comment type="cofactor">
    <cofactor evidence="1">
        <name>siroheme</name>
        <dbReference type="ChEBI" id="CHEBI:60052"/>
    </cofactor>
    <text evidence="1">Binds 1 siroheme per subunit.</text>
</comment>
<comment type="cofactor">
    <cofactor evidence="1">
        <name>[4Fe-4S] cluster</name>
        <dbReference type="ChEBI" id="CHEBI:49883"/>
    </cofactor>
    <text evidence="1">Binds 1 [4Fe-4S] cluster per subunit.</text>
</comment>
<comment type="pathway">
    <text evidence="1">Sulfur metabolism; hydrogen sulfide biosynthesis; hydrogen sulfide from sulfite (NADPH route): step 1/1.</text>
</comment>
<comment type="subunit">
    <text evidence="1">Alpha(8)-beta(8). The alpha component is a flavoprotein, the beta component is a hemoprotein.</text>
</comment>
<comment type="similarity">
    <text evidence="1">Belongs to the nitrite and sulfite reductase 4Fe-4S domain family.</text>
</comment>
<organism>
    <name type="scientific">Methylorubrum extorquens (strain ATCC 14718 / DSM 1338 / JCM 2805 / NCIMB 9133 / AM1)</name>
    <name type="common">Methylobacterium extorquens</name>
    <dbReference type="NCBI Taxonomy" id="272630"/>
    <lineage>
        <taxon>Bacteria</taxon>
        <taxon>Pseudomonadati</taxon>
        <taxon>Pseudomonadota</taxon>
        <taxon>Alphaproteobacteria</taxon>
        <taxon>Hyphomicrobiales</taxon>
        <taxon>Methylobacteriaceae</taxon>
        <taxon>Methylorubrum</taxon>
    </lineage>
</organism>
<sequence length="612" mass="66792">MDDHKPIETPDGPAVDTPGIGARRYETPPTELPITEAEAARAAGLAHNEHLKIASGYLRGGLADGLLKHATGAISEDDGQLVKFHGMYMQDDRDIRAERTKKKLEKAYSFMIRLRIAGGVVTPKQWLILDNIATTYAGSALRATTRQTFQYHGVIKSNLKRTMAAIDSALLDTIAACGDVNRNVMAATNPAQAGAHKIALQLAKDISDTLLPKTGAWREIWLDGERVVGGEDAAEVEPVYGKTYLPRKFKTVVAVPPSNEVDIFAHDLGFIAILDKKNRVTGWNVTVGGGMGMTHGESDTFPRTADVLGFVQPEDALKAAEAVMTVQRDWGNRKNRKNARLKYTIERFGLDAFRAEVEKRIGKKLGAPKPFTFDGNGDRYGWVEGEDGRHHLTLYVPSGRIKDIEGGPQFLSGLRRIAEVHEGDFRLTGNQNVIIANVPAGKRAEIDALVDEYGLTRGASALRRNSMACVALPTCGLALAESERYLPDLLSELEESLARHGLQDEPITIRSTGCPNGCARPFISEIGLVGRGPERYHLYLGAAFDGSRLSKLYREDVTASEIKGTLDPLFAAYAKDRQPGEHFGDFVIRAGFVAKTSNGPDFHERTGPLRAA</sequence>
<accession>C5APZ1</accession>
<protein>
    <recommendedName>
        <fullName evidence="1">Sulfite reductase [NADPH] hemoprotein beta-component</fullName>
        <shortName evidence="1">SiR-HP</shortName>
        <shortName evidence="1">SiRHP</shortName>
        <ecNumber evidence="1">1.8.1.2</ecNumber>
    </recommendedName>
</protein>